<gene>
    <name evidence="1" type="primary">glyA</name>
    <name type="ordered locus">Csac_2061</name>
</gene>
<sequence length="417" mass="46185">MQMYFYNLVKDTDPEIAEAIKNELKRQQNKIELIASENFVSIAVMAAMGSPLTNKYAEGYPNKRYYGGCEYIDVVESIAIERAKKLFGAEHANVQPHSGAQANMAVYFAVLNPGDTILGMNLSHGGHLTHGSPVNFSGKLYNIVSYGVDPETETIDYDEVLRLAKEHRPKLILAGASAYPRIIDFKKFREIADEVGAYLMVDMAHIAGLVAAGLHPSPVEYADFVTTTTHKTLRGPRGGLILCKEKYAKLIDKSIFPGIQGGPLEHVIAAKAVALKEAMTEEFRNYQIQILKNAKALSERLIERGFRLVSGGTDNHLMLVDLRNKGITGKDAEKRLDSLNITCNKNAIPFDTQSPMVTSGIRLGTPAVTTRGFKEEDMIEVADIIHDALTNSDTDDNILQRVKALCEKYPLYSEFRE</sequence>
<evidence type="ECO:0000255" key="1">
    <source>
        <dbReference type="HAMAP-Rule" id="MF_00051"/>
    </source>
</evidence>
<keyword id="KW-0028">Amino-acid biosynthesis</keyword>
<keyword id="KW-0963">Cytoplasm</keyword>
<keyword id="KW-0554">One-carbon metabolism</keyword>
<keyword id="KW-0663">Pyridoxal phosphate</keyword>
<keyword id="KW-0808">Transferase</keyword>
<feature type="chain" id="PRO_0000369903" description="Serine hydroxymethyltransferase">
    <location>
        <begin position="1"/>
        <end position="417"/>
    </location>
</feature>
<feature type="binding site" evidence="1">
    <location>
        <position position="122"/>
    </location>
    <ligand>
        <name>(6S)-5,6,7,8-tetrahydrofolate</name>
        <dbReference type="ChEBI" id="CHEBI:57453"/>
    </ligand>
</feature>
<feature type="binding site" evidence="1">
    <location>
        <begin position="126"/>
        <end position="128"/>
    </location>
    <ligand>
        <name>(6S)-5,6,7,8-tetrahydrofolate</name>
        <dbReference type="ChEBI" id="CHEBI:57453"/>
    </ligand>
</feature>
<feature type="site" description="Plays an important role in substrate specificity" evidence="1">
    <location>
        <position position="230"/>
    </location>
</feature>
<feature type="modified residue" description="N6-(pyridoxal phosphate)lysine" evidence="1">
    <location>
        <position position="231"/>
    </location>
</feature>
<accession>A4XL61</accession>
<protein>
    <recommendedName>
        <fullName evidence="1">Serine hydroxymethyltransferase</fullName>
        <shortName evidence="1">SHMT</shortName>
        <shortName evidence="1">Serine methylase</shortName>
        <ecNumber evidence="1">2.1.2.1</ecNumber>
    </recommendedName>
</protein>
<name>GLYA_CALS8</name>
<proteinExistence type="inferred from homology"/>
<organism>
    <name type="scientific">Caldicellulosiruptor saccharolyticus (strain ATCC 43494 / DSM 8903 / Tp8T 6331)</name>
    <dbReference type="NCBI Taxonomy" id="351627"/>
    <lineage>
        <taxon>Bacteria</taxon>
        <taxon>Bacillati</taxon>
        <taxon>Bacillota</taxon>
        <taxon>Bacillota incertae sedis</taxon>
        <taxon>Caldicellulosiruptorales</taxon>
        <taxon>Caldicellulosiruptoraceae</taxon>
        <taxon>Caldicellulosiruptor</taxon>
    </lineage>
</organism>
<comment type="function">
    <text evidence="1">Catalyzes the reversible interconversion of serine and glycine with tetrahydrofolate (THF) serving as the one-carbon carrier. This reaction serves as the major source of one-carbon groups required for the biosynthesis of purines, thymidylate, methionine, and other important biomolecules. Also exhibits THF-independent aldolase activity toward beta-hydroxyamino acids, producing glycine and aldehydes, via a retro-aldol mechanism.</text>
</comment>
<comment type="catalytic activity">
    <reaction evidence="1">
        <text>(6R)-5,10-methylene-5,6,7,8-tetrahydrofolate + glycine + H2O = (6S)-5,6,7,8-tetrahydrofolate + L-serine</text>
        <dbReference type="Rhea" id="RHEA:15481"/>
        <dbReference type="ChEBI" id="CHEBI:15377"/>
        <dbReference type="ChEBI" id="CHEBI:15636"/>
        <dbReference type="ChEBI" id="CHEBI:33384"/>
        <dbReference type="ChEBI" id="CHEBI:57305"/>
        <dbReference type="ChEBI" id="CHEBI:57453"/>
        <dbReference type="EC" id="2.1.2.1"/>
    </reaction>
</comment>
<comment type="cofactor">
    <cofactor evidence="1">
        <name>pyridoxal 5'-phosphate</name>
        <dbReference type="ChEBI" id="CHEBI:597326"/>
    </cofactor>
</comment>
<comment type="pathway">
    <text evidence="1">One-carbon metabolism; tetrahydrofolate interconversion.</text>
</comment>
<comment type="pathway">
    <text evidence="1">Amino-acid biosynthesis; glycine biosynthesis; glycine from L-serine: step 1/1.</text>
</comment>
<comment type="subunit">
    <text evidence="1">Homodimer.</text>
</comment>
<comment type="subcellular location">
    <subcellularLocation>
        <location evidence="1">Cytoplasm</location>
    </subcellularLocation>
</comment>
<comment type="similarity">
    <text evidence="1">Belongs to the SHMT family.</text>
</comment>
<dbReference type="EC" id="2.1.2.1" evidence="1"/>
<dbReference type="EMBL" id="CP000679">
    <property type="protein sequence ID" value="ABP67646.1"/>
    <property type="molecule type" value="Genomic_DNA"/>
</dbReference>
<dbReference type="SMR" id="A4XL61"/>
<dbReference type="STRING" id="351627.Csac_2061"/>
<dbReference type="KEGG" id="csc:Csac_2061"/>
<dbReference type="eggNOG" id="COG0112">
    <property type="taxonomic scope" value="Bacteria"/>
</dbReference>
<dbReference type="HOGENOM" id="CLU_022477_2_1_9"/>
<dbReference type="UniPathway" id="UPA00193"/>
<dbReference type="UniPathway" id="UPA00288">
    <property type="reaction ID" value="UER01023"/>
</dbReference>
<dbReference type="Proteomes" id="UP000000256">
    <property type="component" value="Chromosome"/>
</dbReference>
<dbReference type="GO" id="GO:0005829">
    <property type="term" value="C:cytosol"/>
    <property type="evidence" value="ECO:0007669"/>
    <property type="project" value="TreeGrafter"/>
</dbReference>
<dbReference type="GO" id="GO:0004372">
    <property type="term" value="F:glycine hydroxymethyltransferase activity"/>
    <property type="evidence" value="ECO:0007669"/>
    <property type="project" value="UniProtKB-UniRule"/>
</dbReference>
<dbReference type="GO" id="GO:0030170">
    <property type="term" value="F:pyridoxal phosphate binding"/>
    <property type="evidence" value="ECO:0007669"/>
    <property type="project" value="UniProtKB-UniRule"/>
</dbReference>
<dbReference type="GO" id="GO:0019264">
    <property type="term" value="P:glycine biosynthetic process from serine"/>
    <property type="evidence" value="ECO:0007669"/>
    <property type="project" value="UniProtKB-UniRule"/>
</dbReference>
<dbReference type="GO" id="GO:0035999">
    <property type="term" value="P:tetrahydrofolate interconversion"/>
    <property type="evidence" value="ECO:0007669"/>
    <property type="project" value="UniProtKB-UniRule"/>
</dbReference>
<dbReference type="CDD" id="cd00378">
    <property type="entry name" value="SHMT"/>
    <property type="match status" value="1"/>
</dbReference>
<dbReference type="FunFam" id="3.40.640.10:FF:000001">
    <property type="entry name" value="Serine hydroxymethyltransferase"/>
    <property type="match status" value="1"/>
</dbReference>
<dbReference type="FunFam" id="3.90.1150.10:FF:000003">
    <property type="entry name" value="Serine hydroxymethyltransferase"/>
    <property type="match status" value="1"/>
</dbReference>
<dbReference type="Gene3D" id="3.90.1150.10">
    <property type="entry name" value="Aspartate Aminotransferase, domain 1"/>
    <property type="match status" value="1"/>
</dbReference>
<dbReference type="Gene3D" id="3.40.640.10">
    <property type="entry name" value="Type I PLP-dependent aspartate aminotransferase-like (Major domain)"/>
    <property type="match status" value="1"/>
</dbReference>
<dbReference type="HAMAP" id="MF_00051">
    <property type="entry name" value="SHMT"/>
    <property type="match status" value="1"/>
</dbReference>
<dbReference type="InterPro" id="IPR015424">
    <property type="entry name" value="PyrdxlP-dep_Trfase"/>
</dbReference>
<dbReference type="InterPro" id="IPR015421">
    <property type="entry name" value="PyrdxlP-dep_Trfase_major"/>
</dbReference>
<dbReference type="InterPro" id="IPR015422">
    <property type="entry name" value="PyrdxlP-dep_Trfase_small"/>
</dbReference>
<dbReference type="InterPro" id="IPR001085">
    <property type="entry name" value="Ser_HO-MeTrfase"/>
</dbReference>
<dbReference type="InterPro" id="IPR049943">
    <property type="entry name" value="Ser_HO-MeTrfase-like"/>
</dbReference>
<dbReference type="InterPro" id="IPR019798">
    <property type="entry name" value="Ser_HO-MeTrfase_PLP_BS"/>
</dbReference>
<dbReference type="InterPro" id="IPR039429">
    <property type="entry name" value="SHMT-like_dom"/>
</dbReference>
<dbReference type="NCBIfam" id="NF000586">
    <property type="entry name" value="PRK00011.1"/>
    <property type="match status" value="1"/>
</dbReference>
<dbReference type="PANTHER" id="PTHR11680">
    <property type="entry name" value="SERINE HYDROXYMETHYLTRANSFERASE"/>
    <property type="match status" value="1"/>
</dbReference>
<dbReference type="PANTHER" id="PTHR11680:SF35">
    <property type="entry name" value="SERINE HYDROXYMETHYLTRANSFERASE 1"/>
    <property type="match status" value="1"/>
</dbReference>
<dbReference type="Pfam" id="PF00464">
    <property type="entry name" value="SHMT"/>
    <property type="match status" value="1"/>
</dbReference>
<dbReference type="PIRSF" id="PIRSF000412">
    <property type="entry name" value="SHMT"/>
    <property type="match status" value="1"/>
</dbReference>
<dbReference type="SUPFAM" id="SSF53383">
    <property type="entry name" value="PLP-dependent transferases"/>
    <property type="match status" value="1"/>
</dbReference>
<dbReference type="PROSITE" id="PS00096">
    <property type="entry name" value="SHMT"/>
    <property type="match status" value="1"/>
</dbReference>
<reference key="1">
    <citation type="submission" date="2007-04" db="EMBL/GenBank/DDBJ databases">
        <title>Genome sequence of the thermophilic hydrogen-producing bacterium Caldicellulosiruptor saccharolyticus DSM 8903.</title>
        <authorList>
            <person name="Copeland A."/>
            <person name="Lucas S."/>
            <person name="Lapidus A."/>
            <person name="Barry K."/>
            <person name="Detter J.C."/>
            <person name="Glavina del Rio T."/>
            <person name="Hammon N."/>
            <person name="Israni S."/>
            <person name="Dalin E."/>
            <person name="Tice H."/>
            <person name="Pitluck S."/>
            <person name="Kiss H."/>
            <person name="Brettin T."/>
            <person name="Bruce D."/>
            <person name="Han C."/>
            <person name="Schmutz J."/>
            <person name="Larimer F."/>
            <person name="Land M."/>
            <person name="Hauser L."/>
            <person name="Kyrpides N."/>
            <person name="Lykidis A."/>
            <person name="van de Werken H.J.G."/>
            <person name="Verhaart M.R.A."/>
            <person name="VanFossen A.L."/>
            <person name="Lewis D.L."/>
            <person name="Nichols J.D."/>
            <person name="Goorissen H.P."/>
            <person name="van Niel E.W.J."/>
            <person name="Stams F.J.M."/>
            <person name="Willquist K.U."/>
            <person name="Ward D.E."/>
            <person name="van der Oost J."/>
            <person name="Kelly R.M."/>
            <person name="Kengen S.M.W."/>
            <person name="Richardson P."/>
        </authorList>
    </citation>
    <scope>NUCLEOTIDE SEQUENCE [LARGE SCALE GENOMIC DNA]</scope>
    <source>
        <strain>ATCC 43494 / DSM 8903 / Tp8T 6331</strain>
    </source>
</reference>